<organism>
    <name type="scientific">Halobacterium salinarum (strain ATCC 700922 / JCM 11081 / NRC-1)</name>
    <name type="common">Halobacterium halobium</name>
    <dbReference type="NCBI Taxonomy" id="64091"/>
    <lineage>
        <taxon>Archaea</taxon>
        <taxon>Methanobacteriati</taxon>
        <taxon>Methanobacteriota</taxon>
        <taxon>Stenosarchaea group</taxon>
        <taxon>Halobacteria</taxon>
        <taxon>Halobacteriales</taxon>
        <taxon>Halobacteriaceae</taxon>
        <taxon>Halobacterium</taxon>
        <taxon>Halobacterium salinarum NRC-34001</taxon>
    </lineage>
</organism>
<proteinExistence type="inferred from homology"/>
<reference key="1">
    <citation type="journal article" date="2000" name="Proc. Natl. Acad. Sci. U.S.A.">
        <title>Genome sequence of Halobacterium species NRC-1.</title>
        <authorList>
            <person name="Ng W.V."/>
            <person name="Kennedy S.P."/>
            <person name="Mahairas G.G."/>
            <person name="Berquist B."/>
            <person name="Pan M."/>
            <person name="Shukla H.D."/>
            <person name="Lasky S.R."/>
            <person name="Baliga N.S."/>
            <person name="Thorsson V."/>
            <person name="Sbrogna J."/>
            <person name="Swartzell S."/>
            <person name="Weir D."/>
            <person name="Hall J."/>
            <person name="Dahl T.A."/>
            <person name="Welti R."/>
            <person name="Goo Y.A."/>
            <person name="Leithauser B."/>
            <person name="Keller K."/>
            <person name="Cruz R."/>
            <person name="Danson M.J."/>
            <person name="Hough D.W."/>
            <person name="Maddocks D.G."/>
            <person name="Jablonski P.E."/>
            <person name="Krebs M.P."/>
            <person name="Angevine C.M."/>
            <person name="Dale H."/>
            <person name="Isenbarger T.A."/>
            <person name="Peck R.F."/>
            <person name="Pohlschroder M."/>
            <person name="Spudich J.L."/>
            <person name="Jung K.-H."/>
            <person name="Alam M."/>
            <person name="Freitas T."/>
            <person name="Hou S."/>
            <person name="Daniels C.J."/>
            <person name="Dennis P.P."/>
            <person name="Omer A.D."/>
            <person name="Ebhardt H."/>
            <person name="Lowe T.M."/>
            <person name="Liang P."/>
            <person name="Riley M."/>
            <person name="Hood L."/>
            <person name="DasSarma S."/>
        </authorList>
    </citation>
    <scope>NUCLEOTIDE SEQUENCE [LARGE SCALE GENOMIC DNA]</scope>
    <source>
        <strain>ATCC 700922 / JCM 11081 / NRC-1</strain>
    </source>
</reference>
<protein>
    <recommendedName>
        <fullName evidence="1">L-aspartate oxidase</fullName>
        <shortName evidence="1">LASPO</shortName>
        <ecNumber evidence="1">1.4.3.16</ecNumber>
    </recommendedName>
    <alternativeName>
        <fullName>Quinolinate synthase B</fullName>
    </alternativeName>
</protein>
<feature type="chain" id="PRO_0000184407" description="L-aspartate oxidase">
    <location>
        <begin position="1"/>
        <end position="509"/>
    </location>
</feature>
<feature type="region of interest" description="Disordered" evidence="2">
    <location>
        <begin position="389"/>
        <end position="412"/>
    </location>
</feature>
<feature type="region of interest" description="Disordered" evidence="2">
    <location>
        <begin position="486"/>
        <end position="509"/>
    </location>
</feature>
<feature type="compositionally biased region" description="Basic and acidic residues" evidence="2">
    <location>
        <begin position="402"/>
        <end position="412"/>
    </location>
</feature>
<feature type="compositionally biased region" description="Acidic residues" evidence="2">
    <location>
        <begin position="499"/>
        <end position="509"/>
    </location>
</feature>
<feature type="active site" description="Proton donor/acceptor" evidence="1">
    <location>
        <position position="279"/>
    </location>
</feature>
<feature type="binding site" evidence="1">
    <location>
        <begin position="14"/>
        <end position="17"/>
    </location>
    <ligand>
        <name>FAD</name>
        <dbReference type="ChEBI" id="CHEBI:57692"/>
    </ligand>
</feature>
<feature type="binding site" evidence="1">
    <location>
        <begin position="45"/>
        <end position="52"/>
    </location>
    <ligand>
        <name>FAD</name>
        <dbReference type="ChEBI" id="CHEBI:57692"/>
    </ligand>
</feature>
<feature type="binding site" evidence="1">
    <location>
        <position position="214"/>
    </location>
    <ligand>
        <name>FAD</name>
        <dbReference type="ChEBI" id="CHEBI:57692"/>
    </ligand>
</feature>
<feature type="binding site" evidence="1">
    <location>
        <position position="358"/>
    </location>
    <ligand>
        <name>FAD</name>
        <dbReference type="ChEBI" id="CHEBI:57692"/>
    </ligand>
</feature>
<feature type="binding site" evidence="1">
    <location>
        <begin position="374"/>
        <end position="375"/>
    </location>
    <ligand>
        <name>FAD</name>
        <dbReference type="ChEBI" id="CHEBI:57692"/>
    </ligand>
</feature>
<feature type="site" description="Important in orienting the L-aspartate substrate" evidence="1">
    <location>
        <position position="114"/>
    </location>
</feature>
<gene>
    <name type="primary">nadB</name>
    <name type="ordered locus">VNG_1883G</name>
</gene>
<dbReference type="EC" id="1.4.3.16" evidence="1"/>
<dbReference type="EMBL" id="AE004437">
    <property type="protein sequence ID" value="AAG20080.1"/>
    <property type="molecule type" value="Genomic_DNA"/>
</dbReference>
<dbReference type="PIR" id="D84339">
    <property type="entry name" value="D84339"/>
</dbReference>
<dbReference type="RefSeq" id="WP_010903379.1">
    <property type="nucleotide sequence ID" value="NC_002607.1"/>
</dbReference>
<dbReference type="SMR" id="Q9HNZ0"/>
<dbReference type="STRING" id="64091.VNG_1883G"/>
<dbReference type="PaxDb" id="64091-VNG_1883G"/>
<dbReference type="KEGG" id="hal:VNG_1883G"/>
<dbReference type="PATRIC" id="fig|64091.14.peg.1438"/>
<dbReference type="HOGENOM" id="CLU_014312_3_2_2"/>
<dbReference type="InParanoid" id="Q9HNZ0"/>
<dbReference type="OrthoDB" id="305271at2157"/>
<dbReference type="PhylomeDB" id="Q9HNZ0"/>
<dbReference type="UniPathway" id="UPA00253">
    <property type="reaction ID" value="UER00326"/>
</dbReference>
<dbReference type="Proteomes" id="UP000000554">
    <property type="component" value="Chromosome"/>
</dbReference>
<dbReference type="GO" id="GO:0005737">
    <property type="term" value="C:cytoplasm"/>
    <property type="evidence" value="ECO:0007669"/>
    <property type="project" value="UniProtKB-SubCell"/>
</dbReference>
<dbReference type="GO" id="GO:0008734">
    <property type="term" value="F:L-aspartate oxidase activity"/>
    <property type="evidence" value="ECO:0007669"/>
    <property type="project" value="UniProtKB-EC"/>
</dbReference>
<dbReference type="GO" id="GO:0000166">
    <property type="term" value="F:nucleotide binding"/>
    <property type="evidence" value="ECO:0007669"/>
    <property type="project" value="UniProtKB-KW"/>
</dbReference>
<dbReference type="GO" id="GO:0009435">
    <property type="term" value="P:NAD biosynthetic process"/>
    <property type="evidence" value="ECO:0007669"/>
    <property type="project" value="UniProtKB-UniPathway"/>
</dbReference>
<dbReference type="FunFam" id="3.90.700.10:FF:000002">
    <property type="entry name" value="L-aspartate oxidase"/>
    <property type="match status" value="1"/>
</dbReference>
<dbReference type="Gene3D" id="3.50.50.60">
    <property type="entry name" value="FAD/NAD(P)-binding domain"/>
    <property type="match status" value="1"/>
</dbReference>
<dbReference type="Gene3D" id="1.20.58.100">
    <property type="entry name" value="Fumarate reductase/succinate dehydrogenase flavoprotein-like, C-terminal domain"/>
    <property type="match status" value="1"/>
</dbReference>
<dbReference type="Gene3D" id="3.90.700.10">
    <property type="entry name" value="Succinate dehydrogenase/fumarate reductase flavoprotein, catalytic domain"/>
    <property type="match status" value="1"/>
</dbReference>
<dbReference type="InterPro" id="IPR003953">
    <property type="entry name" value="FAD-dep_OxRdtase_2_FAD-bd"/>
</dbReference>
<dbReference type="InterPro" id="IPR036188">
    <property type="entry name" value="FAD/NAD-bd_sf"/>
</dbReference>
<dbReference type="InterPro" id="IPR037099">
    <property type="entry name" value="Fum_R/Succ_DH_flav-like_C_sf"/>
</dbReference>
<dbReference type="InterPro" id="IPR015939">
    <property type="entry name" value="Fum_Rdtase/Succ_DH_flav-like_C"/>
</dbReference>
<dbReference type="InterPro" id="IPR005288">
    <property type="entry name" value="NadB"/>
</dbReference>
<dbReference type="InterPro" id="IPR027477">
    <property type="entry name" value="Succ_DH/fumarate_Rdtase_cat_sf"/>
</dbReference>
<dbReference type="PANTHER" id="PTHR42716">
    <property type="entry name" value="L-ASPARTATE OXIDASE"/>
    <property type="match status" value="1"/>
</dbReference>
<dbReference type="PANTHER" id="PTHR42716:SF2">
    <property type="entry name" value="L-ASPARTATE OXIDASE, CHLOROPLASTIC"/>
    <property type="match status" value="1"/>
</dbReference>
<dbReference type="Pfam" id="PF00890">
    <property type="entry name" value="FAD_binding_2"/>
    <property type="match status" value="1"/>
</dbReference>
<dbReference type="Pfam" id="PF02910">
    <property type="entry name" value="Succ_DH_flav_C"/>
    <property type="match status" value="1"/>
</dbReference>
<dbReference type="PRINTS" id="PR00368">
    <property type="entry name" value="FADPNR"/>
</dbReference>
<dbReference type="PRINTS" id="PR00411">
    <property type="entry name" value="PNDRDTASEI"/>
</dbReference>
<dbReference type="SUPFAM" id="SSF51905">
    <property type="entry name" value="FAD/NAD(P)-binding domain"/>
    <property type="match status" value="1"/>
</dbReference>
<dbReference type="SUPFAM" id="SSF46977">
    <property type="entry name" value="Succinate dehydrogenase/fumarate reductase flavoprotein C-terminal domain"/>
    <property type="match status" value="1"/>
</dbReference>
<dbReference type="SUPFAM" id="SSF56425">
    <property type="entry name" value="Succinate dehydrogenase/fumarate reductase flavoprotein, catalytic domain"/>
    <property type="match status" value="1"/>
</dbReference>
<accession>Q9HNZ0</accession>
<comment type="function">
    <text evidence="1">Catalyzes the oxidation of L-aspartate to iminoaspartate, the first step in the de novo biosynthesis of NAD(+).</text>
</comment>
<comment type="catalytic activity">
    <reaction evidence="1">
        <text>L-aspartate + O2 = iminosuccinate + H2O2</text>
        <dbReference type="Rhea" id="RHEA:25876"/>
        <dbReference type="ChEBI" id="CHEBI:15379"/>
        <dbReference type="ChEBI" id="CHEBI:16240"/>
        <dbReference type="ChEBI" id="CHEBI:29991"/>
        <dbReference type="ChEBI" id="CHEBI:77875"/>
        <dbReference type="EC" id="1.4.3.16"/>
    </reaction>
    <physiologicalReaction direction="left-to-right" evidence="1">
        <dbReference type="Rhea" id="RHEA:25877"/>
    </physiologicalReaction>
</comment>
<comment type="cofactor">
    <cofactor evidence="1">
        <name>FAD</name>
        <dbReference type="ChEBI" id="CHEBI:57692"/>
    </cofactor>
    <text evidence="1">Binds 1 FAD per subunit.</text>
</comment>
<comment type="pathway">
    <text evidence="1">Cofactor biosynthesis; NAD(+) biosynthesis; iminoaspartate from L-aspartate (oxidase route): step 1/1.</text>
</comment>
<comment type="subcellular location">
    <subcellularLocation>
        <location evidence="1">Cytoplasm</location>
    </subcellularLocation>
</comment>
<comment type="similarity">
    <text evidence="3">Belongs to the FAD-dependent oxidoreductase 2 family. NadB subfamily.</text>
</comment>
<sequence length="509" mass="53226">MTDATTTDVLVLGSGIAGCGAALAAAREGASVLVATKAQQPADASTDWAQGGIATTRDDPESLKRDILAAGDGEADPEAVDALVGDAAAAVEDVLVDTLGVPFDGEEGFDYAREAAHSAARILHVDAATGHHILGPFLRHLDAHENVDMLEDAAALDLITDEGAVTGALLDRNPRTGDRAETGVPVFAGSTVLATGGIGDLYRRSTNPRGSTGDGVAMAALAGADVTDAEYVQFHPTAYDDADPFLVSEAVRGEGALLRNADGERFMPDYHEDAELAPRDVVARAVAAERDATGEVRLDVSPLAFAEEFPGLAEACADRGVDWETGIPVAPCEHFLCGGVAVDTVGRTSLDRLFAVGECARTGVHGANRLASTSLLEGLVWGLRAGETAAGDDRAPAPSEPPELRDRDPDLPDGFAAEKFRRLRRVMDEHVGLRRTGADLQRAQGVLRRLKGEVDSYARTRTSRDLYQLRNAAVVGLLIARAAGENPESAGCHHRSDEAAAEEAPDAGH</sequence>
<evidence type="ECO:0000250" key="1">
    <source>
        <dbReference type="UniProtKB" id="P10902"/>
    </source>
</evidence>
<evidence type="ECO:0000256" key="2">
    <source>
        <dbReference type="SAM" id="MobiDB-lite"/>
    </source>
</evidence>
<evidence type="ECO:0000305" key="3"/>
<keyword id="KW-0963">Cytoplasm</keyword>
<keyword id="KW-0274">FAD</keyword>
<keyword id="KW-0285">Flavoprotein</keyword>
<keyword id="KW-0547">Nucleotide-binding</keyword>
<keyword id="KW-0560">Oxidoreductase</keyword>
<keyword id="KW-0662">Pyridine nucleotide biosynthesis</keyword>
<keyword id="KW-1185">Reference proteome</keyword>
<name>NADB_HALSA</name>